<keyword id="KW-0186">Copper</keyword>
<keyword id="KW-0256">Endoplasmic reticulum</keyword>
<keyword id="KW-0325">Glycoprotein</keyword>
<keyword id="KW-0472">Membrane</keyword>
<keyword id="KW-0479">Metal-binding</keyword>
<keyword id="KW-0560">Oxidoreductase</keyword>
<keyword id="KW-1185">Reference proteome</keyword>
<keyword id="KW-0732">Signal</keyword>
<gene>
    <name type="primary">LPR1</name>
    <name type="ordered locus">At1g23010</name>
    <name type="ORF">F19G10.5</name>
</gene>
<accession>F4I4K5</accession>
<accession>O23123</accession>
<accession>Q8GXX3</accession>
<reference key="1">
    <citation type="journal article" date="2000" name="Nature">
        <title>Sequence and analysis of chromosome 1 of the plant Arabidopsis thaliana.</title>
        <authorList>
            <person name="Theologis A."/>
            <person name="Ecker J.R."/>
            <person name="Palm C.J."/>
            <person name="Federspiel N.A."/>
            <person name="Kaul S."/>
            <person name="White O."/>
            <person name="Alonso J."/>
            <person name="Altafi H."/>
            <person name="Araujo R."/>
            <person name="Bowman C.L."/>
            <person name="Brooks S.Y."/>
            <person name="Buehler E."/>
            <person name="Chan A."/>
            <person name="Chao Q."/>
            <person name="Chen H."/>
            <person name="Cheuk R.F."/>
            <person name="Chin C.W."/>
            <person name="Chung M.K."/>
            <person name="Conn L."/>
            <person name="Conway A.B."/>
            <person name="Conway A.R."/>
            <person name="Creasy T.H."/>
            <person name="Dewar K."/>
            <person name="Dunn P."/>
            <person name="Etgu P."/>
            <person name="Feldblyum T.V."/>
            <person name="Feng J.-D."/>
            <person name="Fong B."/>
            <person name="Fujii C.Y."/>
            <person name="Gill J.E."/>
            <person name="Goldsmith A.D."/>
            <person name="Haas B."/>
            <person name="Hansen N.F."/>
            <person name="Hughes B."/>
            <person name="Huizar L."/>
            <person name="Hunter J.L."/>
            <person name="Jenkins J."/>
            <person name="Johnson-Hopson C."/>
            <person name="Khan S."/>
            <person name="Khaykin E."/>
            <person name="Kim C.J."/>
            <person name="Koo H.L."/>
            <person name="Kremenetskaia I."/>
            <person name="Kurtz D.B."/>
            <person name="Kwan A."/>
            <person name="Lam B."/>
            <person name="Langin-Hooper S."/>
            <person name="Lee A."/>
            <person name="Lee J.M."/>
            <person name="Lenz C.A."/>
            <person name="Li J.H."/>
            <person name="Li Y.-P."/>
            <person name="Lin X."/>
            <person name="Liu S.X."/>
            <person name="Liu Z.A."/>
            <person name="Luros J.S."/>
            <person name="Maiti R."/>
            <person name="Marziali A."/>
            <person name="Militscher J."/>
            <person name="Miranda M."/>
            <person name="Nguyen M."/>
            <person name="Nierman W.C."/>
            <person name="Osborne B.I."/>
            <person name="Pai G."/>
            <person name="Peterson J."/>
            <person name="Pham P.K."/>
            <person name="Rizzo M."/>
            <person name="Rooney T."/>
            <person name="Rowley D."/>
            <person name="Sakano H."/>
            <person name="Salzberg S.L."/>
            <person name="Schwartz J.R."/>
            <person name="Shinn P."/>
            <person name="Southwick A.M."/>
            <person name="Sun H."/>
            <person name="Tallon L.J."/>
            <person name="Tambunga G."/>
            <person name="Toriumi M.J."/>
            <person name="Town C.D."/>
            <person name="Utterback T."/>
            <person name="Van Aken S."/>
            <person name="Vaysberg M."/>
            <person name="Vysotskaia V.S."/>
            <person name="Walker M."/>
            <person name="Wu D."/>
            <person name="Yu G."/>
            <person name="Fraser C.M."/>
            <person name="Venter J.C."/>
            <person name="Davis R.W."/>
        </authorList>
    </citation>
    <scope>NUCLEOTIDE SEQUENCE [LARGE SCALE GENOMIC DNA]</scope>
    <source>
        <strain>cv. Columbia</strain>
    </source>
</reference>
<reference key="2">
    <citation type="journal article" date="2017" name="Plant J.">
        <title>Araport11: a complete reannotation of the Arabidopsis thaliana reference genome.</title>
        <authorList>
            <person name="Cheng C.Y."/>
            <person name="Krishnakumar V."/>
            <person name="Chan A.P."/>
            <person name="Thibaud-Nissen F."/>
            <person name="Schobel S."/>
            <person name="Town C.D."/>
        </authorList>
    </citation>
    <scope>GENOME REANNOTATION</scope>
    <source>
        <strain>cv. Columbia</strain>
    </source>
</reference>
<reference key="3">
    <citation type="journal article" date="2002" name="Science">
        <title>Functional annotation of a full-length Arabidopsis cDNA collection.</title>
        <authorList>
            <person name="Seki M."/>
            <person name="Narusaka M."/>
            <person name="Kamiya A."/>
            <person name="Ishida J."/>
            <person name="Satou M."/>
            <person name="Sakurai T."/>
            <person name="Nakajima M."/>
            <person name="Enju A."/>
            <person name="Akiyama K."/>
            <person name="Oono Y."/>
            <person name="Muramatsu M."/>
            <person name="Hayashizaki Y."/>
            <person name="Kawai J."/>
            <person name="Carninci P."/>
            <person name="Itoh M."/>
            <person name="Ishii Y."/>
            <person name="Arakawa T."/>
            <person name="Shibata K."/>
            <person name="Shinagawa A."/>
            <person name="Shinozaki K."/>
        </authorList>
    </citation>
    <scope>NUCLEOTIDE SEQUENCE [LARGE SCALE MRNA]</scope>
    <source>
        <strain>cv. Columbia</strain>
    </source>
</reference>
<reference key="4">
    <citation type="journal article" date="2003" name="Science">
        <title>Empirical analysis of transcriptional activity in the Arabidopsis genome.</title>
        <authorList>
            <person name="Yamada K."/>
            <person name="Lim J."/>
            <person name="Dale J.M."/>
            <person name="Chen H."/>
            <person name="Shinn P."/>
            <person name="Palm C.J."/>
            <person name="Southwick A.M."/>
            <person name="Wu H.C."/>
            <person name="Kim C.J."/>
            <person name="Nguyen M."/>
            <person name="Pham P.K."/>
            <person name="Cheuk R.F."/>
            <person name="Karlin-Newmann G."/>
            <person name="Liu S.X."/>
            <person name="Lam B."/>
            <person name="Sakano H."/>
            <person name="Wu T."/>
            <person name="Yu G."/>
            <person name="Miranda M."/>
            <person name="Quach H.L."/>
            <person name="Tripp M."/>
            <person name="Chang C.H."/>
            <person name="Lee J.M."/>
            <person name="Toriumi M.J."/>
            <person name="Chan M.M."/>
            <person name="Tang C.C."/>
            <person name="Onodera C.S."/>
            <person name="Deng J.M."/>
            <person name="Akiyama K."/>
            <person name="Ansari Y."/>
            <person name="Arakawa T."/>
            <person name="Banh J."/>
            <person name="Banno F."/>
            <person name="Bowser L."/>
            <person name="Brooks S.Y."/>
            <person name="Carninci P."/>
            <person name="Chao Q."/>
            <person name="Choy N."/>
            <person name="Enju A."/>
            <person name="Goldsmith A.D."/>
            <person name="Gurjal M."/>
            <person name="Hansen N.F."/>
            <person name="Hayashizaki Y."/>
            <person name="Johnson-Hopson C."/>
            <person name="Hsuan V.W."/>
            <person name="Iida K."/>
            <person name="Karnes M."/>
            <person name="Khan S."/>
            <person name="Koesema E."/>
            <person name="Ishida J."/>
            <person name="Jiang P.X."/>
            <person name="Jones T."/>
            <person name="Kawai J."/>
            <person name="Kamiya A."/>
            <person name="Meyers C."/>
            <person name="Nakajima M."/>
            <person name="Narusaka M."/>
            <person name="Seki M."/>
            <person name="Sakurai T."/>
            <person name="Satou M."/>
            <person name="Tamse R."/>
            <person name="Vaysberg M."/>
            <person name="Wallender E.K."/>
            <person name="Wong C."/>
            <person name="Yamamura Y."/>
            <person name="Yuan S."/>
            <person name="Shinozaki K."/>
            <person name="Davis R.W."/>
            <person name="Theologis A."/>
            <person name="Ecker J.R."/>
        </authorList>
    </citation>
    <scope>NUCLEOTIDE SEQUENCE [LARGE SCALE MRNA]</scope>
    <source>
        <strain>cv. Columbia</strain>
    </source>
</reference>
<reference key="5">
    <citation type="journal article" date="2007" name="Nat. Genet.">
        <title>Root tip contact with low-phosphate media reprograms plant root architecture.</title>
        <authorList>
            <person name="Svistoonoff S."/>
            <person name="Creff A."/>
            <person name="Reymond M."/>
            <person name="Sigoillot-Claude C."/>
            <person name="Ricaud L."/>
            <person name="Blanchet A."/>
            <person name="Nussaume L."/>
            <person name="Desnos T."/>
        </authorList>
    </citation>
    <scope>FUNCTION</scope>
    <scope>DISRUPTION PHENOTYPE</scope>
    <source>
        <strain>cv. Columbia</strain>
        <strain>cv. Sha</strain>
    </source>
</reference>
<reference key="6">
    <citation type="journal article" date="2009" name="Proc. Natl. Acad. Sci. U.S.A.">
        <title>ER-resident proteins PDR2 and LPR1 mediate the developmental response of root meristems to phosphate availability.</title>
        <authorList>
            <person name="Ticconi C.A."/>
            <person name="Lucero R.D."/>
            <person name="Sakhonwasee S."/>
            <person name="Adamson A.W."/>
            <person name="Creff A."/>
            <person name="Nussaume L."/>
            <person name="Desnos T."/>
            <person name="Abel S."/>
        </authorList>
    </citation>
    <scope>FUNCTION</scope>
    <scope>SUBCELLULAR LOCATION</scope>
    <scope>DISRUPTION PHENOTYPE</scope>
</reference>
<dbReference type="EC" id="1.-.-.-"/>
<dbReference type="EMBL" id="AF000657">
    <property type="protein sequence ID" value="AAB72167.1"/>
    <property type="status" value="ALT_INIT"/>
    <property type="molecule type" value="Genomic_DNA"/>
</dbReference>
<dbReference type="EMBL" id="CP002684">
    <property type="protein sequence ID" value="AEE30321.1"/>
    <property type="molecule type" value="Genomic_DNA"/>
</dbReference>
<dbReference type="EMBL" id="AK117988">
    <property type="protein sequence ID" value="BAC42623.1"/>
    <property type="molecule type" value="mRNA"/>
</dbReference>
<dbReference type="EMBL" id="BT005929">
    <property type="protein sequence ID" value="AAO64864.1"/>
    <property type="molecule type" value="mRNA"/>
</dbReference>
<dbReference type="PIR" id="B86364">
    <property type="entry name" value="B86364"/>
</dbReference>
<dbReference type="RefSeq" id="NP_173714.2">
    <property type="nucleotide sequence ID" value="NM_102149.4"/>
</dbReference>
<dbReference type="SMR" id="F4I4K5"/>
<dbReference type="FunCoup" id="F4I4K5">
    <property type="interactions" value="23"/>
</dbReference>
<dbReference type="STRING" id="3702.F4I4K5"/>
<dbReference type="GlyCosmos" id="F4I4K5">
    <property type="glycosylation" value="5 sites, No reported glycans"/>
</dbReference>
<dbReference type="GlyGen" id="F4I4K5">
    <property type="glycosylation" value="6 sites"/>
</dbReference>
<dbReference type="PaxDb" id="3702-AT1G23010.1"/>
<dbReference type="ProteomicsDB" id="238669"/>
<dbReference type="EnsemblPlants" id="AT1G23010.1">
    <property type="protein sequence ID" value="AT1G23010.1"/>
    <property type="gene ID" value="AT1G23010"/>
</dbReference>
<dbReference type="GeneID" id="838909"/>
<dbReference type="Gramene" id="AT1G23010.1">
    <property type="protein sequence ID" value="AT1G23010.1"/>
    <property type="gene ID" value="AT1G23010"/>
</dbReference>
<dbReference type="KEGG" id="ath:AT1G23010"/>
<dbReference type="Araport" id="AT1G23010"/>
<dbReference type="TAIR" id="AT1G23010">
    <property type="gene designation" value="LPR1"/>
</dbReference>
<dbReference type="eggNOG" id="ENOG502QR4X">
    <property type="taxonomic scope" value="Eukaryota"/>
</dbReference>
<dbReference type="HOGENOM" id="CLU_009100_4_0_1"/>
<dbReference type="InParanoid" id="F4I4K5"/>
<dbReference type="OMA" id="NASHPVH"/>
<dbReference type="PRO" id="PR:F4I4K5"/>
<dbReference type="Proteomes" id="UP000006548">
    <property type="component" value="Chromosome 1"/>
</dbReference>
<dbReference type="ExpressionAtlas" id="F4I4K5">
    <property type="expression patterns" value="baseline and differential"/>
</dbReference>
<dbReference type="GO" id="GO:0005783">
    <property type="term" value="C:endoplasmic reticulum"/>
    <property type="evidence" value="ECO:0000314"/>
    <property type="project" value="TAIR"/>
</dbReference>
<dbReference type="GO" id="GO:0005789">
    <property type="term" value="C:endoplasmic reticulum membrane"/>
    <property type="evidence" value="ECO:0007669"/>
    <property type="project" value="UniProtKB-SubCell"/>
</dbReference>
<dbReference type="GO" id="GO:0005507">
    <property type="term" value="F:copper ion binding"/>
    <property type="evidence" value="ECO:0007669"/>
    <property type="project" value="InterPro"/>
</dbReference>
<dbReference type="GO" id="GO:0016682">
    <property type="term" value="F:oxidoreductase activity, acting on diphenols and related substances as donors, oxygen as acceptor"/>
    <property type="evidence" value="ECO:0000314"/>
    <property type="project" value="TAIR"/>
</dbReference>
<dbReference type="GO" id="GO:0016036">
    <property type="term" value="P:cellular response to phosphate starvation"/>
    <property type="evidence" value="ECO:0000315"/>
    <property type="project" value="TAIR"/>
</dbReference>
<dbReference type="GO" id="GO:0010073">
    <property type="term" value="P:meristem maintenance"/>
    <property type="evidence" value="ECO:0000316"/>
    <property type="project" value="TAIR"/>
</dbReference>
<dbReference type="CDD" id="cd13844">
    <property type="entry name" value="CuRO_1_BOD_CotA_like"/>
    <property type="match status" value="1"/>
</dbReference>
<dbReference type="CDD" id="cd13868">
    <property type="entry name" value="CuRO_2_CotA_like"/>
    <property type="match status" value="1"/>
</dbReference>
<dbReference type="CDD" id="cd13891">
    <property type="entry name" value="CuRO_3_CotA_like"/>
    <property type="match status" value="1"/>
</dbReference>
<dbReference type="FunFam" id="2.60.40.420:FF:000102">
    <property type="entry name" value="Multi-copper oxidase type I family protein"/>
    <property type="match status" value="1"/>
</dbReference>
<dbReference type="FunFam" id="2.60.40.420:FF:000081">
    <property type="entry name" value="Spore coat protein A"/>
    <property type="match status" value="1"/>
</dbReference>
<dbReference type="FunFam" id="2.60.40.420:FF:000087">
    <property type="entry name" value="Spore coat protein A"/>
    <property type="match status" value="1"/>
</dbReference>
<dbReference type="Gene3D" id="2.60.40.420">
    <property type="entry name" value="Cupredoxins - blue copper proteins"/>
    <property type="match status" value="3"/>
</dbReference>
<dbReference type="InterPro" id="IPR001117">
    <property type="entry name" value="Cu-oxidase_2nd"/>
</dbReference>
<dbReference type="InterPro" id="IPR011706">
    <property type="entry name" value="Cu-oxidase_C"/>
</dbReference>
<dbReference type="InterPro" id="IPR008972">
    <property type="entry name" value="Cupredoxin"/>
</dbReference>
<dbReference type="InterPro" id="IPR052152">
    <property type="entry name" value="LPR1/LPR2"/>
</dbReference>
<dbReference type="PANTHER" id="PTHR48461">
    <property type="entry name" value="MULTICOPPER OXIDASE LPR1-LIKE"/>
    <property type="match status" value="1"/>
</dbReference>
<dbReference type="PANTHER" id="PTHR48461:SF1">
    <property type="entry name" value="MULTICOPPER OXIDASE LPR1-LIKE"/>
    <property type="match status" value="1"/>
</dbReference>
<dbReference type="Pfam" id="PF00394">
    <property type="entry name" value="Cu-oxidase"/>
    <property type="match status" value="1"/>
</dbReference>
<dbReference type="Pfam" id="PF07731">
    <property type="entry name" value="Cu-oxidase_2"/>
    <property type="match status" value="1"/>
</dbReference>
<dbReference type="SUPFAM" id="SSF49503">
    <property type="entry name" value="Cupredoxins"/>
    <property type="match status" value="3"/>
</dbReference>
<feature type="signal peptide" evidence="2">
    <location>
        <begin position="1"/>
        <end position="28"/>
    </location>
</feature>
<feature type="chain" id="PRO_0000429267" description="Multicopper oxidase LPR1">
    <location>
        <begin position="29"/>
        <end position="581"/>
    </location>
</feature>
<feature type="domain" description="Plastocyanin-like">
    <location>
        <begin position="283"/>
        <end position="352"/>
    </location>
</feature>
<feature type="binding site" description="type 2 copper site" evidence="1">
    <location>
        <position position="148"/>
    </location>
    <ligand>
        <name>Cu cation</name>
        <dbReference type="ChEBI" id="CHEBI:23378"/>
        <label>1</label>
    </ligand>
</feature>
<feature type="binding site" description="type 3 copper site" evidence="1">
    <location>
        <position position="150"/>
    </location>
    <ligand>
        <name>Cu cation</name>
        <dbReference type="ChEBI" id="CHEBI:23378"/>
        <label>2</label>
    </ligand>
</feature>
<feature type="binding site" description="type 3 copper site" evidence="1">
    <location>
        <position position="196"/>
    </location>
    <ligand>
        <name>Cu cation</name>
        <dbReference type="ChEBI" id="CHEBI:23378"/>
        <label>2</label>
    </ligand>
</feature>
<feature type="binding site" description="type 3 copper site" evidence="1">
    <location>
        <position position="198"/>
    </location>
    <ligand>
        <name>Cu cation</name>
        <dbReference type="ChEBI" id="CHEBI:23378"/>
        <label>3</label>
    </ligand>
</feature>
<feature type="binding site" description="type 1 copper site" evidence="1">
    <location>
        <position position="464"/>
    </location>
    <ligand>
        <name>Cu cation</name>
        <dbReference type="ChEBI" id="CHEBI:23378"/>
        <label>4</label>
    </ligand>
</feature>
<feature type="binding site" description="type 2 copper site" evidence="1">
    <location>
        <position position="467"/>
    </location>
    <ligand>
        <name>Cu cation</name>
        <dbReference type="ChEBI" id="CHEBI:23378"/>
        <label>1</label>
    </ligand>
</feature>
<feature type="binding site" description="type 3 copper site" evidence="1">
    <location>
        <position position="469"/>
    </location>
    <ligand>
        <name>Cu cation</name>
        <dbReference type="ChEBI" id="CHEBI:23378"/>
        <label>3</label>
    </ligand>
</feature>
<feature type="binding site" description="type 3 copper site" evidence="1">
    <location>
        <position position="562"/>
    </location>
    <ligand>
        <name>Cu cation</name>
        <dbReference type="ChEBI" id="CHEBI:23378"/>
        <label>3</label>
    </ligand>
</feature>
<feature type="binding site" description="type 1 copper site" evidence="1">
    <location>
        <position position="563"/>
    </location>
    <ligand>
        <name>Cu cation</name>
        <dbReference type="ChEBI" id="CHEBI:23378"/>
        <label>4</label>
    </ligand>
</feature>
<feature type="binding site" description="type 3 copper site" evidence="1">
    <location>
        <position position="564"/>
    </location>
    <ligand>
        <name>Cu cation</name>
        <dbReference type="ChEBI" id="CHEBI:23378"/>
        <label>2</label>
    </ligand>
</feature>
<feature type="binding site" description="type 1 copper site" evidence="1">
    <location>
        <position position="568"/>
    </location>
    <ligand>
        <name>Cu cation</name>
        <dbReference type="ChEBI" id="CHEBI:23378"/>
        <label>4</label>
    </ligand>
</feature>
<feature type="binding site" description="type 1 copper site" evidence="1">
    <location>
        <position position="573"/>
    </location>
    <ligand>
        <name>Cu cation</name>
        <dbReference type="ChEBI" id="CHEBI:23378"/>
        <label>4</label>
    </ligand>
</feature>
<feature type="glycosylation site" description="N-linked (GlcNAc...) asparagine" evidence="2">
    <location>
        <position position="254"/>
    </location>
</feature>
<feature type="glycosylation site" description="N-linked (GlcNAc...) asparagine" evidence="2">
    <location>
        <position position="298"/>
    </location>
</feature>
<feature type="glycosylation site" description="N-linked (GlcNAc...) asparagine" evidence="2">
    <location>
        <position position="386"/>
    </location>
</feature>
<feature type="glycosylation site" description="N-linked (GlcNAc...) asparagine" evidence="2">
    <location>
        <position position="458"/>
    </location>
</feature>
<feature type="glycosylation site" description="N-linked (GlcNAc...) asparagine" evidence="2">
    <location>
        <position position="546"/>
    </location>
</feature>
<feature type="sequence conflict" description="In Ref. 3; BAC42623 and 4; AAO64864." evidence="5" ref="3 4">
    <original>K</original>
    <variation>E</variation>
    <location>
        <position position="474"/>
    </location>
</feature>
<organism>
    <name type="scientific">Arabidopsis thaliana</name>
    <name type="common">Mouse-ear cress</name>
    <dbReference type="NCBI Taxonomy" id="3702"/>
    <lineage>
        <taxon>Eukaryota</taxon>
        <taxon>Viridiplantae</taxon>
        <taxon>Streptophyta</taxon>
        <taxon>Embryophyta</taxon>
        <taxon>Tracheophyta</taxon>
        <taxon>Spermatophyta</taxon>
        <taxon>Magnoliopsida</taxon>
        <taxon>eudicotyledons</taxon>
        <taxon>Gunneridae</taxon>
        <taxon>Pentapetalae</taxon>
        <taxon>rosids</taxon>
        <taxon>malvids</taxon>
        <taxon>Brassicales</taxon>
        <taxon>Brassicaceae</taxon>
        <taxon>Camelineae</taxon>
        <taxon>Arabidopsis</taxon>
    </lineage>
</organism>
<comment type="function">
    <text evidence="3 4">Multicopper oxidase that may be involved in copper homeostasis and oxidative stress response, and that is necessary for root growth inhibition by low phosphate conditions. Functions together with LPR2 and PDR2 in a common pathway that adjusts root meristem activity to phosphate availability. Oxidizes the substrate 2,2'-azinobis-(3-ethylbenzthiazoline-6-sulphonate) in vitro.</text>
</comment>
<comment type="cofactor">
    <cofactor evidence="1">
        <name>Cu cation</name>
        <dbReference type="ChEBI" id="CHEBI:23378"/>
    </cofactor>
    <text evidence="1">Binds 4 Cu cations per monomer. The Cu cations are bound as 3 distinct Cu centers known as type 1 or blue, type 2 or normal, and type 3 or coupled binuclear.</text>
</comment>
<comment type="subcellular location">
    <subcellularLocation>
        <location evidence="6">Endoplasmic reticulum membrane</location>
        <topology evidence="6">Peripheral membrane protein</topology>
    </subcellularLocation>
    <text evidence="6">Associates with PDR2 at the ER membrane.</text>
</comment>
<comment type="disruption phenotype">
    <text evidence="3 4">No visible phenotype under normal growth conditions, but mutant plants have reduced inhibition of primary root growth in low inorganic phosphate conditions.</text>
</comment>
<comment type="similarity">
    <text evidence="5">Belongs to the multicopper oxidase family.</text>
</comment>
<comment type="sequence caution" evidence="5">
    <conflict type="erroneous initiation">
        <sequence resource="EMBL-CDS" id="AAB72167"/>
    </conflict>
    <text>Truncated N-terminus.</text>
</comment>
<name>LPR1_ARATH</name>
<sequence>MESLLCRRRIKRVMVLIIALTWLRSTCGELEDQLFEVGKLKMFVDDLPDMPRLYGFNSVHGIIKPASLQIGMFSTKWKFHRDLPATPVFAYGTSRSKATVPGPTIETVYGVDTYVTWRNHLPKSHILPWDPTISPATPKHGGIPTVVHLHGGIHEPTSDGNADAWFTAGFRETGPKWTKTTLHYENKQQPGNMWYHDHAMGLTRVNLLAGLVGAYILRHHAVESPFQLPTGDEFDRPLIIFDRSFRKDGSIYMNATGNNPSIHPQWQPEYFGDVIIVNGKAWPRLNVRRRKYRFRIINASNARFFKFFFSNGLDFIVVGSDSAYLSKPVMTKSILLSPSEIVDVVVDFYKSPSRTVVLANDAPYPYPSGDPVNEENGKVMKFIINNESEDDTCTIPKKLINYPNADVSNAVLTRYISMYEYVSNSDEPTHLLVNGLPYEAPVTETPKSGTTEVWEVINLTEDNHPLHIHLGLFKVVEQTALLAAGLEEFKECMTKQNDAVKCQISKYARGKKTAVTAHERGWKNVFKMMPGHVTRILVRFSYIHTNASYPFDPTQEPGYVYHCHILDHEDNMMMRPLKVII</sequence>
<proteinExistence type="evidence at transcript level"/>
<evidence type="ECO:0000250" key="1">
    <source>
        <dbReference type="UniProtKB" id="P37064"/>
    </source>
</evidence>
<evidence type="ECO:0000255" key="2"/>
<evidence type="ECO:0000269" key="3">
    <source>
    </source>
</evidence>
<evidence type="ECO:0000269" key="4">
    <source>
    </source>
</evidence>
<evidence type="ECO:0000305" key="5"/>
<evidence type="ECO:0000305" key="6">
    <source>
    </source>
</evidence>
<protein>
    <recommendedName>
        <fullName>Multicopper oxidase LPR1</fullName>
        <ecNumber>1.-.-.-</ecNumber>
    </recommendedName>
    <alternativeName>
        <fullName>Protein LOW PHOSPHATE ROOT 1</fullName>
    </alternativeName>
</protein>